<sequence>MIDQKIFETTLNIDDPTNFCTNVEAHLLKELENIYVGKCFKNSFILNITGVIQRSPCFIMRTNNSGRGYMHVRFSAVVSYLNAFDLIAAVKIIKNDSNIILGESLLTEPVTIVIPSSESQNNVAEVGQIVPVQLANSSVYYIPGRQQASATGSIFIPKHTFSVYHVQEELTQEQALNLTKLVNIIEMLLESRSKKDFKQICFFEKLYYTYSISSDEILDLKIWKGPKGKEMSRLKPCNVLSFLYDALKNKSSSLGFWARPPNLLKSSPLAYQQDQNSFNATELPIICSAEVMFVTLLKEIINYLQFMNDLCDTFNNEQLIKRHENIWMLIEQRKIGHDF</sequence>
<feature type="chain" id="PRO_0000373653" description="DNA-directed RNA polymerase RPB7 homolog">
    <location>
        <begin position="1"/>
        <end position="339"/>
    </location>
</feature>
<feature type="strand" evidence="7">
    <location>
        <begin position="2"/>
        <end position="14"/>
    </location>
</feature>
<feature type="helix" evidence="7">
    <location>
        <begin position="16"/>
        <end position="19"/>
    </location>
</feature>
<feature type="helix" evidence="7">
    <location>
        <begin position="20"/>
        <end position="22"/>
    </location>
</feature>
<feature type="helix" evidence="7">
    <location>
        <begin position="23"/>
        <end position="35"/>
    </location>
</feature>
<feature type="strand" evidence="7">
    <location>
        <begin position="38"/>
        <end position="40"/>
    </location>
</feature>
<feature type="strand" evidence="7">
    <location>
        <begin position="43"/>
        <end position="54"/>
    </location>
</feature>
<feature type="strand" evidence="7">
    <location>
        <begin position="61"/>
        <end position="65"/>
    </location>
</feature>
<feature type="strand" evidence="7">
    <location>
        <begin position="68"/>
        <end position="79"/>
    </location>
</feature>
<feature type="strand" evidence="7">
    <location>
        <begin position="86"/>
        <end position="88"/>
    </location>
</feature>
<feature type="strand" evidence="7">
    <location>
        <begin position="90"/>
        <end position="93"/>
    </location>
</feature>
<feature type="turn" evidence="8">
    <location>
        <begin position="96"/>
        <end position="98"/>
    </location>
</feature>
<feature type="strand" evidence="7">
    <location>
        <begin position="99"/>
        <end position="104"/>
    </location>
</feature>
<feature type="strand" evidence="7">
    <location>
        <begin position="106"/>
        <end position="108"/>
    </location>
</feature>
<feature type="strand" evidence="7">
    <location>
        <begin position="110"/>
        <end position="118"/>
    </location>
</feature>
<feature type="helix" evidence="7">
    <location>
        <begin position="119"/>
        <end position="123"/>
    </location>
</feature>
<feature type="strand" evidence="7">
    <location>
        <begin position="132"/>
        <end position="134"/>
    </location>
</feature>
<feature type="strand" evidence="7">
    <location>
        <begin position="146"/>
        <end position="154"/>
    </location>
</feature>
<feature type="strand" evidence="7">
    <location>
        <begin position="164"/>
        <end position="166"/>
    </location>
</feature>
<feature type="helix" evidence="7">
    <location>
        <begin position="175"/>
        <end position="194"/>
    </location>
</feature>
<feature type="helix" evidence="7">
    <location>
        <begin position="197"/>
        <end position="207"/>
    </location>
</feature>
<feature type="strand" evidence="8">
    <location>
        <begin position="208"/>
        <end position="210"/>
    </location>
</feature>
<feature type="strand" evidence="7">
    <location>
        <begin position="217"/>
        <end position="219"/>
    </location>
</feature>
<feature type="strand" evidence="7">
    <location>
        <begin position="224"/>
        <end position="226"/>
    </location>
</feature>
<feature type="helix" evidence="7">
    <location>
        <begin position="239"/>
        <end position="244"/>
    </location>
</feature>
<feature type="helix" evidence="7">
    <location>
        <begin position="245"/>
        <end position="247"/>
    </location>
</feature>
<feature type="strand" evidence="7">
    <location>
        <begin position="255"/>
        <end position="258"/>
    </location>
</feature>
<feature type="strand" evidence="7">
    <location>
        <begin position="261"/>
        <end position="263"/>
    </location>
</feature>
<feature type="strand" evidence="7">
    <location>
        <begin position="265"/>
        <end position="267"/>
    </location>
</feature>
<feature type="strand" evidence="7">
    <location>
        <begin position="269"/>
        <end position="276"/>
    </location>
</feature>
<feature type="strand" evidence="7">
    <location>
        <begin position="285"/>
        <end position="287"/>
    </location>
</feature>
<feature type="helix" evidence="7">
    <location>
        <begin position="289"/>
        <end position="313"/>
    </location>
</feature>
<feature type="helix" evidence="7">
    <location>
        <begin position="317"/>
        <end position="333"/>
    </location>
</feature>
<gene>
    <name type="ordered locus">Ba71V-105</name>
    <name type="ORF">D339L</name>
</gene>
<proteinExistence type="evidence at protein level"/>
<protein>
    <recommendedName>
        <fullName evidence="4 5">DNA-directed RNA polymerase RPB7 homolog</fullName>
        <shortName evidence="6">RPB7 homolog</shortName>
    </recommendedName>
</protein>
<name>RPB7_ASFB7</name>
<keyword id="KW-0002">3D-structure</keyword>
<keyword id="KW-0240">DNA-directed RNA polymerase</keyword>
<keyword id="KW-0244">Early protein</keyword>
<keyword id="KW-1035">Host cytoplasm</keyword>
<keyword id="KW-1185">Reference proteome</keyword>
<keyword id="KW-0804">Transcription</keyword>
<keyword id="KW-1195">Viral transcription</keyword>
<keyword id="KW-0946">Virion</keyword>
<accession>Q89907</accession>
<evidence type="ECO:0000250" key="1">
    <source>
        <dbReference type="UniProtKB" id="P62487"/>
    </source>
</evidence>
<evidence type="ECO:0000269" key="2">
    <source>
    </source>
</evidence>
<evidence type="ECO:0000269" key="3">
    <source>
    </source>
</evidence>
<evidence type="ECO:0000303" key="4">
    <source>
    </source>
</evidence>
<evidence type="ECO:0000303" key="5">
    <source>
    </source>
</evidence>
<evidence type="ECO:0000305" key="6"/>
<evidence type="ECO:0007829" key="7">
    <source>
        <dbReference type="PDB" id="8Q3B"/>
    </source>
</evidence>
<evidence type="ECO:0007829" key="8">
    <source>
        <dbReference type="PDB" id="8Q3K"/>
    </source>
</evidence>
<comment type="function">
    <text evidence="1">Component of the DNA-directed RNA polymerase (RNAP) that catalyzes the transcription in the cytoplasm of viral DNA into RNA using the four ribonucleoside triphosphates as substrates.</text>
</comment>
<comment type="subunit">
    <text evidence="5">Part of the viral DNA-directed RNA polymerase that consists of 8 polII-like subunits (RPB1, RPB2, RPB3, RPB5, RPB6, RPB7, RPB9, RPB10), a capping enzyme and a termination factor.</text>
</comment>
<comment type="subcellular location">
    <subcellularLocation>
        <location evidence="6">Host cytoplasm</location>
    </subcellularLocation>
    <subcellularLocation>
        <location evidence="2">Virion</location>
    </subcellularLocation>
    <text evidence="2">Found in association with viral nucleoid.</text>
</comment>
<comment type="induction">
    <text evidence="3">Expressed in the early phase of the viral replicative cycle.</text>
</comment>
<comment type="domain">
    <text evidence="5">Contains an extended C-terminus, with no homology to characterized proteins.</text>
</comment>
<comment type="similarity">
    <text evidence="6">Belongs to the Asfivirus DNA-directed RNA polymerase RPB7 homolog family.</text>
</comment>
<reference key="1">
    <citation type="journal article" date="1993" name="Gene">
        <title>Two putative African swine fever virus helicases similar to yeast 'DEAH' pre-mRNA processing proteins and vaccinia virus ATPases D11L and D6R.</title>
        <authorList>
            <person name="Yanez R.J."/>
            <person name="Rodriguez J.M."/>
            <person name="Boursnell M.E."/>
            <person name="Rodriguez J.F."/>
            <person name="Vinuela E."/>
        </authorList>
    </citation>
    <scope>NUCLEOTIDE SEQUENCE [GENOMIC DNA]</scope>
</reference>
<reference key="2">
    <citation type="journal article" date="1995" name="Virology">
        <title>Analysis of the complete nucleotide sequence of African swine fever virus.</title>
        <authorList>
            <person name="Yanez R.J."/>
            <person name="Rodriguez J.M."/>
            <person name="Nogal M.L."/>
            <person name="Yuste L."/>
            <person name="Enriquez C."/>
            <person name="Rodriguez J.F."/>
            <person name="Vinuela E."/>
        </authorList>
    </citation>
    <scope>NUCLEOTIDE SEQUENCE [LARGE SCALE GENOMIC DNA]</scope>
</reference>
<reference key="3">
    <citation type="journal article" date="2013" name="Virus Res.">
        <title>African swine fever virus transcription.</title>
        <authorList>
            <person name="Rodriguez J.M."/>
            <person name="Salas M.L."/>
        </authorList>
    </citation>
    <scope>REVIEW</scope>
</reference>
<reference key="4">
    <citation type="journal article" date="2018" name="J. Virol.">
        <title>A Proteomic Atlas of the African Swine Fever Virus Particle.</title>
        <authorList>
            <person name="Alejo A."/>
            <person name="Matamoros T."/>
            <person name="Guerra M."/>
            <person name="Andres G."/>
        </authorList>
    </citation>
    <scope>SUBCELLULAR LOCATION</scope>
</reference>
<reference key="5">
    <citation type="journal article" date="2020" name="Biochem. Soc. Trans.">
        <title>Transcriptome view of a killer: African swine fever virus.</title>
        <authorList>
            <person name="Cackett G."/>
            <person name="Sykora M."/>
            <person name="Werner F."/>
        </authorList>
    </citation>
    <scope>REVIEW</scope>
</reference>
<reference key="6">
    <citation type="journal article" date="2020" name="J. Virol.">
        <title>The African Swine Fever Virus Transcriptome.</title>
        <authorList>
            <person name="Cackett G."/>
            <person name="Matelska D."/>
            <person name="Sykora M."/>
            <person name="Portugal R."/>
            <person name="Malecki M."/>
            <person name="Baehler J."/>
            <person name="Dixon L."/>
            <person name="Werner F."/>
        </authorList>
    </citation>
    <scope>INDUCTION</scope>
</reference>
<dbReference type="EMBL" id="L10061">
    <property type="protein sequence ID" value="AAA42696.1"/>
    <property type="molecule type" value="Genomic_DNA"/>
</dbReference>
<dbReference type="EMBL" id="U18466">
    <property type="protein sequence ID" value="AAA65334.1"/>
    <property type="molecule type" value="Genomic_DNA"/>
</dbReference>
<dbReference type="PIR" id="JT0668">
    <property type="entry name" value="JT0668"/>
</dbReference>
<dbReference type="RefSeq" id="NP_042798.1">
    <property type="nucleotide sequence ID" value="NC_001659.2"/>
</dbReference>
<dbReference type="PDB" id="8Q3B">
    <property type="method" value="EM"/>
    <property type="resolution" value="2.69 A"/>
    <property type="chains" value="D=1-339"/>
</dbReference>
<dbReference type="PDB" id="8Q3K">
    <property type="method" value="EM"/>
    <property type="resolution" value="2.92 A"/>
    <property type="chains" value="D=1-339"/>
</dbReference>
<dbReference type="PDB" id="8XX4">
    <property type="method" value="EM"/>
    <property type="resolution" value="2.60 A"/>
    <property type="chains" value="F=2-81"/>
</dbReference>
<dbReference type="PDB" id="8XX5">
    <property type="method" value="EM"/>
    <property type="resolution" value="2.40 A"/>
    <property type="chains" value="F=1-334"/>
</dbReference>
<dbReference type="PDB" id="8XXP">
    <property type="method" value="EM"/>
    <property type="resolution" value="2.60 A"/>
    <property type="chains" value="F=1-154"/>
</dbReference>
<dbReference type="PDB" id="8XXT">
    <property type="method" value="EM"/>
    <property type="resolution" value="2.85 A"/>
    <property type="chains" value="F=1-334"/>
</dbReference>
<dbReference type="PDB" id="8XY6">
    <property type="method" value="EM"/>
    <property type="resolution" value="3.00 A"/>
    <property type="chains" value="F=1-151"/>
</dbReference>
<dbReference type="PDB" id="8Y0E">
    <property type="method" value="EM"/>
    <property type="resolution" value="3.00 A"/>
    <property type="chains" value="F=1-339"/>
</dbReference>
<dbReference type="PDB" id="8YQT">
    <property type="method" value="EM"/>
    <property type="resolution" value="2.56 A"/>
    <property type="chains" value="F=1-339"/>
</dbReference>
<dbReference type="PDB" id="8YQU">
    <property type="method" value="EM"/>
    <property type="resolution" value="2.85 A"/>
    <property type="chains" value="F=1-339"/>
</dbReference>
<dbReference type="PDB" id="8YQV">
    <property type="method" value="EM"/>
    <property type="resolution" value="2.67 A"/>
    <property type="chains" value="F=1-339"/>
</dbReference>
<dbReference type="PDB" id="8YQW">
    <property type="method" value="EM"/>
    <property type="resolution" value="2.68 A"/>
    <property type="chains" value="F=1-339"/>
</dbReference>
<dbReference type="PDB" id="8YQX">
    <property type="method" value="EM"/>
    <property type="resolution" value="2.97 A"/>
    <property type="chains" value="F=1-339"/>
</dbReference>
<dbReference type="PDB" id="8YQY">
    <property type="method" value="EM"/>
    <property type="resolution" value="3.68 A"/>
    <property type="chains" value="F=1-339"/>
</dbReference>
<dbReference type="PDB" id="8YQZ">
    <property type="method" value="EM"/>
    <property type="resolution" value="2.78 A"/>
    <property type="chains" value="F=1-339"/>
</dbReference>
<dbReference type="PDBsum" id="8Q3B"/>
<dbReference type="PDBsum" id="8Q3K"/>
<dbReference type="PDBsum" id="8XX4"/>
<dbReference type="PDBsum" id="8XX5"/>
<dbReference type="PDBsum" id="8XXP"/>
<dbReference type="PDBsum" id="8XXT"/>
<dbReference type="PDBsum" id="8XY6"/>
<dbReference type="PDBsum" id="8Y0E"/>
<dbReference type="PDBsum" id="8YQT"/>
<dbReference type="PDBsum" id="8YQU"/>
<dbReference type="PDBsum" id="8YQV"/>
<dbReference type="PDBsum" id="8YQW"/>
<dbReference type="PDBsum" id="8YQX"/>
<dbReference type="PDBsum" id="8YQY"/>
<dbReference type="PDBsum" id="8YQZ"/>
<dbReference type="EMDB" id="EMD-18120"/>
<dbReference type="EMDB" id="EMD-18129"/>
<dbReference type="SMR" id="Q89907"/>
<dbReference type="GeneID" id="22220334"/>
<dbReference type="KEGG" id="vg:22220334"/>
<dbReference type="Proteomes" id="UP000000624">
    <property type="component" value="Segment"/>
</dbReference>
<dbReference type="GO" id="GO:0000428">
    <property type="term" value="C:DNA-directed RNA polymerase complex"/>
    <property type="evidence" value="ECO:0007669"/>
    <property type="project" value="UniProtKB-KW"/>
</dbReference>
<dbReference type="GO" id="GO:0030430">
    <property type="term" value="C:host cell cytoplasm"/>
    <property type="evidence" value="ECO:0007669"/>
    <property type="project" value="UniProtKB-SubCell"/>
</dbReference>
<dbReference type="GO" id="GO:0044423">
    <property type="term" value="C:virion component"/>
    <property type="evidence" value="ECO:0007669"/>
    <property type="project" value="UniProtKB-KW"/>
</dbReference>
<dbReference type="GO" id="GO:0019083">
    <property type="term" value="P:viral transcription"/>
    <property type="evidence" value="ECO:0007669"/>
    <property type="project" value="UniProtKB-KW"/>
</dbReference>
<organism>
    <name type="scientific">African swine fever virus (strain Badajoz 1971 Vero-adapted)</name>
    <name type="common">Ba71V</name>
    <name type="synonym">ASFV</name>
    <dbReference type="NCBI Taxonomy" id="10498"/>
    <lineage>
        <taxon>Viruses</taxon>
        <taxon>Varidnaviria</taxon>
        <taxon>Bamfordvirae</taxon>
        <taxon>Nucleocytoviricota</taxon>
        <taxon>Pokkesviricetes</taxon>
        <taxon>Asfuvirales</taxon>
        <taxon>Asfarviridae</taxon>
        <taxon>Asfivirus</taxon>
        <taxon>African swine fever virus</taxon>
    </lineage>
</organism>
<organismHost>
    <name type="scientific">Ornithodoros</name>
    <name type="common">relapsing fever ticks</name>
    <dbReference type="NCBI Taxonomy" id="6937"/>
</organismHost>
<organismHost>
    <name type="scientific">Sus scrofa</name>
    <name type="common">Pig</name>
    <dbReference type="NCBI Taxonomy" id="9823"/>
</organismHost>